<keyword id="KW-0968">Cytoplasmic vesicle</keyword>
<keyword id="KW-0472">Membrane</keyword>
<keyword id="KW-1185">Reference proteome</keyword>
<keyword id="KW-0812">Transmembrane</keyword>
<keyword id="KW-1133">Transmembrane helix</keyword>
<reference key="1">
    <citation type="submission" date="2005-11" db="EMBL/GenBank/DDBJ databases">
        <authorList>
            <consortium name="NIH - Mammalian Gene Collection (MGC) project"/>
        </authorList>
    </citation>
    <scope>NUCLEOTIDE SEQUENCE [LARGE SCALE MRNA]</scope>
    <source>
        <strain>Crossbred X Angus</strain>
        <tissue>Liver</tissue>
    </source>
</reference>
<accession>Q32KQ5</accession>
<comment type="function">
    <text evidence="1">Probably inhibits protein phosphatase 1 (PP1) in sperm via binding to catalytic subunit PPP1CC.</text>
</comment>
<comment type="subunit">
    <text evidence="1">Interacts (via RVxF motif) with PPP1CC.</text>
</comment>
<comment type="subcellular location">
    <subcellularLocation>
        <location evidence="1">Cytoplasmic vesicle</location>
        <location evidence="1">Secretory vesicle</location>
        <location evidence="1">Acrosome membrane</location>
        <topology evidence="2">Multi-pass membrane protein</topology>
    </subcellularLocation>
</comment>
<comment type="caution">
    <text evidence="3">This protein is not related to the claudin family.</text>
</comment>
<comment type="sequence caution" evidence="3">
    <conflict type="erroneous initiation">
        <sequence resource="EMBL-CDS" id="AAI09976"/>
    </conflict>
</comment>
<gene>
    <name type="primary">TMEM225</name>
    <name type="synonym">PMP22CD</name>
</gene>
<name>TM225_BOVIN</name>
<organism>
    <name type="scientific">Bos taurus</name>
    <name type="common">Bovine</name>
    <dbReference type="NCBI Taxonomy" id="9913"/>
    <lineage>
        <taxon>Eukaryota</taxon>
        <taxon>Metazoa</taxon>
        <taxon>Chordata</taxon>
        <taxon>Craniata</taxon>
        <taxon>Vertebrata</taxon>
        <taxon>Euteleostomi</taxon>
        <taxon>Mammalia</taxon>
        <taxon>Eutheria</taxon>
        <taxon>Laurasiatheria</taxon>
        <taxon>Artiodactyla</taxon>
        <taxon>Ruminantia</taxon>
        <taxon>Pecora</taxon>
        <taxon>Bovidae</taxon>
        <taxon>Bovinae</taxon>
        <taxon>Bos</taxon>
    </lineage>
</organism>
<feature type="chain" id="PRO_0000339349" description="Transmembrane protein 225">
    <location>
        <begin position="1"/>
        <end position="231"/>
    </location>
</feature>
<feature type="topological domain" description="Cytoplasmic" evidence="3">
    <location>
        <begin position="1"/>
        <end position="13"/>
    </location>
</feature>
<feature type="transmembrane region" description="Helical" evidence="2">
    <location>
        <begin position="14"/>
        <end position="34"/>
    </location>
</feature>
<feature type="topological domain" description="Extracellular" evidence="3">
    <location>
        <begin position="35"/>
        <end position="67"/>
    </location>
</feature>
<feature type="transmembrane region" description="Helical" evidence="2">
    <location>
        <begin position="68"/>
        <end position="88"/>
    </location>
</feature>
<feature type="topological domain" description="Cytoplasmic" evidence="3">
    <location>
        <begin position="89"/>
        <end position="97"/>
    </location>
</feature>
<feature type="transmembrane region" description="Helical" evidence="2">
    <location>
        <begin position="98"/>
        <end position="118"/>
    </location>
</feature>
<feature type="topological domain" description="Extracellular" evidence="3">
    <location>
        <begin position="119"/>
        <end position="135"/>
    </location>
</feature>
<feature type="transmembrane region" description="Helical" evidence="2">
    <location>
        <begin position="136"/>
        <end position="156"/>
    </location>
</feature>
<feature type="topological domain" description="Cytoplasmic" evidence="3">
    <location>
        <begin position="157"/>
        <end position="231"/>
    </location>
</feature>
<feature type="short sequence motif" description="RVxF" evidence="1">
    <location>
        <begin position="225"/>
        <end position="229"/>
    </location>
</feature>
<dbReference type="EMBL" id="BC109975">
    <property type="protein sequence ID" value="AAI09976.1"/>
    <property type="status" value="ALT_INIT"/>
    <property type="molecule type" value="mRNA"/>
</dbReference>
<dbReference type="RefSeq" id="NP_001073753.2">
    <property type="nucleotide sequence ID" value="NM_001080284.2"/>
</dbReference>
<dbReference type="SMR" id="Q32KQ5"/>
<dbReference type="STRING" id="9913.ENSBTAP00000044826"/>
<dbReference type="PaxDb" id="9913-ENSBTAP00000044826"/>
<dbReference type="GeneID" id="519985"/>
<dbReference type="KEGG" id="bta:519985"/>
<dbReference type="CTD" id="338661"/>
<dbReference type="eggNOG" id="ENOG502TDTU">
    <property type="taxonomic scope" value="Eukaryota"/>
</dbReference>
<dbReference type="InParanoid" id="Q32KQ5"/>
<dbReference type="OrthoDB" id="9833398at2759"/>
<dbReference type="Proteomes" id="UP000009136">
    <property type="component" value="Unplaced"/>
</dbReference>
<dbReference type="GO" id="GO:0002080">
    <property type="term" value="C:acrosomal membrane"/>
    <property type="evidence" value="ECO:0007669"/>
    <property type="project" value="UniProtKB-SubCell"/>
</dbReference>
<dbReference type="InterPro" id="IPR033542">
    <property type="entry name" value="TMEM225"/>
</dbReference>
<dbReference type="PANTHER" id="PTHR36477">
    <property type="entry name" value="TRANSMEMBRANE PROTEIN 225"/>
    <property type="match status" value="1"/>
</dbReference>
<dbReference type="PANTHER" id="PTHR36477:SF1">
    <property type="entry name" value="TRANSMEMBRANE PROTEIN 225"/>
    <property type="match status" value="1"/>
</dbReference>
<dbReference type="Pfam" id="PF25452">
    <property type="entry name" value="TM225"/>
    <property type="match status" value="1"/>
</dbReference>
<protein>
    <recommendedName>
        <fullName>Transmembrane protein 225</fullName>
    </recommendedName>
</protein>
<sequence>MVHILVRKVEATNMFFSSWTLVFLAVGIIIEEWAELKLGPQKPTITHSPWICCTPLWPSDGLEVIRNILIVVLSLSFMHNLLLGFEFTYMIPQTKYTLIMTACLAFLTGILLLGALLLYHHMLRQGESVYYSSYKISWIIFTAYLNVLFLFISGFLSLLQYKQPIDGSGSLIPRSARKSQVMEQHGVSIKVVSLPAGTAMPRSIVRLHSAHMKEDSPERLNIQARRVTWAL</sequence>
<evidence type="ECO:0000250" key="1">
    <source>
        <dbReference type="UniProtKB" id="Q9D9S2"/>
    </source>
</evidence>
<evidence type="ECO:0000255" key="2"/>
<evidence type="ECO:0000305" key="3"/>
<proteinExistence type="evidence at transcript level"/>